<gene>
    <name evidence="1" type="primary">rimM</name>
    <name type="ordered locus">Mflv_4173</name>
</gene>
<comment type="function">
    <text evidence="1">An accessory protein needed during the final step in the assembly of 30S ribosomal subunit, possibly for assembly of the head region. Essential for efficient processing of 16S rRNA. May be needed both before and after RbfA during the maturation of 16S rRNA. It has affinity for free ribosomal 30S subunits but not for 70S ribosomes.</text>
</comment>
<comment type="subunit">
    <text evidence="1">Binds ribosomal protein uS19.</text>
</comment>
<comment type="subcellular location">
    <subcellularLocation>
        <location evidence="1">Cytoplasm</location>
    </subcellularLocation>
</comment>
<comment type="domain">
    <text evidence="1">The PRC barrel domain binds ribosomal protein uS19.</text>
</comment>
<comment type="similarity">
    <text evidence="1">Belongs to the RimM family.</text>
</comment>
<accession>A4TE78</accession>
<dbReference type="EMBL" id="CP000656">
    <property type="protein sequence ID" value="ABP46642.1"/>
    <property type="molecule type" value="Genomic_DNA"/>
</dbReference>
<dbReference type="SMR" id="A4TE78"/>
<dbReference type="STRING" id="350054.Mflv_4173"/>
<dbReference type="KEGG" id="mgi:Mflv_4173"/>
<dbReference type="eggNOG" id="COG0806">
    <property type="taxonomic scope" value="Bacteria"/>
</dbReference>
<dbReference type="HOGENOM" id="CLU_077636_0_0_11"/>
<dbReference type="OrthoDB" id="5381335at2"/>
<dbReference type="GO" id="GO:0005737">
    <property type="term" value="C:cytoplasm"/>
    <property type="evidence" value="ECO:0007669"/>
    <property type="project" value="UniProtKB-SubCell"/>
</dbReference>
<dbReference type="GO" id="GO:0005840">
    <property type="term" value="C:ribosome"/>
    <property type="evidence" value="ECO:0007669"/>
    <property type="project" value="InterPro"/>
</dbReference>
<dbReference type="GO" id="GO:0043022">
    <property type="term" value="F:ribosome binding"/>
    <property type="evidence" value="ECO:0007669"/>
    <property type="project" value="InterPro"/>
</dbReference>
<dbReference type="GO" id="GO:0042274">
    <property type="term" value="P:ribosomal small subunit biogenesis"/>
    <property type="evidence" value="ECO:0007669"/>
    <property type="project" value="UniProtKB-UniRule"/>
</dbReference>
<dbReference type="GO" id="GO:0006364">
    <property type="term" value="P:rRNA processing"/>
    <property type="evidence" value="ECO:0007669"/>
    <property type="project" value="UniProtKB-UniRule"/>
</dbReference>
<dbReference type="Gene3D" id="2.30.30.240">
    <property type="entry name" value="PRC-barrel domain"/>
    <property type="match status" value="1"/>
</dbReference>
<dbReference type="Gene3D" id="2.40.30.60">
    <property type="entry name" value="RimM"/>
    <property type="match status" value="1"/>
</dbReference>
<dbReference type="HAMAP" id="MF_00014">
    <property type="entry name" value="Ribosome_mat_RimM"/>
    <property type="match status" value="1"/>
</dbReference>
<dbReference type="InterPro" id="IPR011033">
    <property type="entry name" value="PRC_barrel-like_sf"/>
</dbReference>
<dbReference type="InterPro" id="IPR056792">
    <property type="entry name" value="PRC_RimM"/>
</dbReference>
<dbReference type="InterPro" id="IPR011961">
    <property type="entry name" value="RimM"/>
</dbReference>
<dbReference type="InterPro" id="IPR002676">
    <property type="entry name" value="RimM_N"/>
</dbReference>
<dbReference type="InterPro" id="IPR036976">
    <property type="entry name" value="RimM_N_sf"/>
</dbReference>
<dbReference type="InterPro" id="IPR009000">
    <property type="entry name" value="Transl_B-barrel_sf"/>
</dbReference>
<dbReference type="NCBIfam" id="TIGR02273">
    <property type="entry name" value="16S_RimM"/>
    <property type="match status" value="1"/>
</dbReference>
<dbReference type="PANTHER" id="PTHR33692">
    <property type="entry name" value="RIBOSOME MATURATION FACTOR RIMM"/>
    <property type="match status" value="1"/>
</dbReference>
<dbReference type="PANTHER" id="PTHR33692:SF1">
    <property type="entry name" value="RIBOSOME MATURATION FACTOR RIMM"/>
    <property type="match status" value="1"/>
</dbReference>
<dbReference type="Pfam" id="PF24986">
    <property type="entry name" value="PRC_RimM"/>
    <property type="match status" value="1"/>
</dbReference>
<dbReference type="Pfam" id="PF01782">
    <property type="entry name" value="RimM"/>
    <property type="match status" value="1"/>
</dbReference>
<dbReference type="SUPFAM" id="SSF50346">
    <property type="entry name" value="PRC-barrel domain"/>
    <property type="match status" value="1"/>
</dbReference>
<dbReference type="SUPFAM" id="SSF50447">
    <property type="entry name" value="Translation proteins"/>
    <property type="match status" value="1"/>
</dbReference>
<protein>
    <recommendedName>
        <fullName evidence="1">Ribosome maturation factor RimM</fullName>
    </recommendedName>
</protein>
<name>RIMM_MYCGI</name>
<keyword id="KW-0143">Chaperone</keyword>
<keyword id="KW-0963">Cytoplasm</keyword>
<keyword id="KW-0690">Ribosome biogenesis</keyword>
<keyword id="KW-0698">rRNA processing</keyword>
<evidence type="ECO:0000255" key="1">
    <source>
        <dbReference type="HAMAP-Rule" id="MF_00014"/>
    </source>
</evidence>
<proteinExistence type="inferred from homology"/>
<feature type="chain" id="PRO_1000074032" description="Ribosome maturation factor RimM">
    <location>
        <begin position="1"/>
        <end position="173"/>
    </location>
</feature>
<feature type="domain" description="PRC barrel" evidence="1">
    <location>
        <begin position="96"/>
        <end position="169"/>
    </location>
</feature>
<organism>
    <name type="scientific">Mycolicibacterium gilvum (strain PYR-GCK)</name>
    <name type="common">Mycobacterium gilvum (strain PYR-GCK)</name>
    <dbReference type="NCBI Taxonomy" id="350054"/>
    <lineage>
        <taxon>Bacteria</taxon>
        <taxon>Bacillati</taxon>
        <taxon>Actinomycetota</taxon>
        <taxon>Actinomycetes</taxon>
        <taxon>Mycobacteriales</taxon>
        <taxon>Mycobacteriaceae</taxon>
        <taxon>Mycolicibacterium</taxon>
    </lineage>
</organism>
<reference key="1">
    <citation type="submission" date="2007-04" db="EMBL/GenBank/DDBJ databases">
        <title>Complete sequence of chromosome of Mycobacterium gilvum PYR-GCK.</title>
        <authorList>
            <consortium name="US DOE Joint Genome Institute"/>
            <person name="Copeland A."/>
            <person name="Lucas S."/>
            <person name="Lapidus A."/>
            <person name="Barry K."/>
            <person name="Detter J.C."/>
            <person name="Glavina del Rio T."/>
            <person name="Hammon N."/>
            <person name="Israni S."/>
            <person name="Dalin E."/>
            <person name="Tice H."/>
            <person name="Pitluck S."/>
            <person name="Chain P."/>
            <person name="Malfatti S."/>
            <person name="Shin M."/>
            <person name="Vergez L."/>
            <person name="Schmutz J."/>
            <person name="Larimer F."/>
            <person name="Land M."/>
            <person name="Hauser L."/>
            <person name="Kyrpides N."/>
            <person name="Mikhailova N."/>
            <person name="Miller C."/>
            <person name="Richardson P."/>
        </authorList>
    </citation>
    <scope>NUCLEOTIDE SEQUENCE [LARGE SCALE GENOMIC DNA]</scope>
    <source>
        <strain>PYR-GCK</strain>
    </source>
</reference>
<sequence>MDLVVGRVAKAHGVTGELTVEVRTDDPQGRFVRGAVLRGRPPRGGAEREYVIESVRTHGDRLLVRFDGVADRDAADALRGTVFLVDSADLPPIEDPDEFYDHQLEGLTVITTSGGEVGKVAEVLHTAAGELLAVRTADDTEVLVPFVSAIVLSVSLDDQLITIDPPDGLLELD</sequence>